<reference key="1">
    <citation type="journal article" date="1998" name="Science">
        <title>Genome sequence of the nematode C. elegans: a platform for investigating biology.</title>
        <authorList>
            <consortium name="The C. elegans sequencing consortium"/>
        </authorList>
    </citation>
    <scope>NUCLEOTIDE SEQUENCE [LARGE SCALE GENOMIC DNA]</scope>
    <source>
        <strain>Bristol N2</strain>
    </source>
</reference>
<sequence>MATDQKRGLLIVFEGLDRSGKSTQAKRLVESINKKSTESGDASSSPSAVLQAFPDRSSSIGKLIDQYLRKEIDMDEHALHLLFSADRFSKNQMIRDNIAKGIDVICDRYCYSGVAYSLAKGLPEQWVRSSDVGLPKPDAVLFFDVSPEVAAQRGGFGEERLETATIQQKVAAVMPTLRDDAYWKTVNADGDLDSVEKNVFRIYENLDREKPFESLEKI</sequence>
<protein>
    <recommendedName>
        <fullName evidence="2">Thymidylate kinase</fullName>
        <ecNumber>2.7.4.9</ecNumber>
    </recommendedName>
    <alternativeName>
        <fullName>dTMP kinase</fullName>
    </alternativeName>
</protein>
<organism>
    <name type="scientific">Caenorhabditis elegans</name>
    <dbReference type="NCBI Taxonomy" id="6239"/>
    <lineage>
        <taxon>Eukaryota</taxon>
        <taxon>Metazoa</taxon>
        <taxon>Ecdysozoa</taxon>
        <taxon>Nematoda</taxon>
        <taxon>Chromadorea</taxon>
        <taxon>Rhabditida</taxon>
        <taxon>Rhabditina</taxon>
        <taxon>Rhabditomorpha</taxon>
        <taxon>Rhabditoidea</taxon>
        <taxon>Rhabditidae</taxon>
        <taxon>Peloderinae</taxon>
        <taxon>Caenorhabditis</taxon>
    </lineage>
</organism>
<accession>Q22018</accession>
<dbReference type="EC" id="2.7.4.9"/>
<dbReference type="EMBL" id="Z66515">
    <property type="protein sequence ID" value="CAA91347.1"/>
    <property type="molecule type" value="Genomic_DNA"/>
</dbReference>
<dbReference type="PIR" id="T24244">
    <property type="entry name" value="T24244"/>
</dbReference>
<dbReference type="RefSeq" id="NP_496151.1">
    <property type="nucleotide sequence ID" value="NM_063750.6"/>
</dbReference>
<dbReference type="SMR" id="Q22018"/>
<dbReference type="BioGRID" id="39873">
    <property type="interactions" value="11"/>
</dbReference>
<dbReference type="FunCoup" id="Q22018">
    <property type="interactions" value="2205"/>
</dbReference>
<dbReference type="STRING" id="6239.R53.2.2"/>
<dbReference type="PaxDb" id="6239-R53.2"/>
<dbReference type="PeptideAtlas" id="Q22018"/>
<dbReference type="EnsemblMetazoa" id="R53.2.1">
    <property type="protein sequence ID" value="R53.2.1"/>
    <property type="gene ID" value="WBGene00011272"/>
</dbReference>
<dbReference type="GeneID" id="174553"/>
<dbReference type="KEGG" id="cel:CELE_R53.2"/>
<dbReference type="UCSC" id="R53.2">
    <property type="organism name" value="c. elegans"/>
</dbReference>
<dbReference type="AGR" id="WB:WBGene00011272"/>
<dbReference type="CTD" id="174553"/>
<dbReference type="WormBase" id="R53.2">
    <property type="protein sequence ID" value="CE03571"/>
    <property type="gene ID" value="WBGene00011272"/>
    <property type="gene designation" value="dtmk-1"/>
</dbReference>
<dbReference type="eggNOG" id="KOG3327">
    <property type="taxonomic scope" value="Eukaryota"/>
</dbReference>
<dbReference type="GeneTree" id="ENSGT00940000154030"/>
<dbReference type="HOGENOM" id="CLU_049131_3_1_1"/>
<dbReference type="InParanoid" id="Q22018"/>
<dbReference type="OMA" id="YWHQFDA"/>
<dbReference type="OrthoDB" id="425602at2759"/>
<dbReference type="PhylomeDB" id="Q22018"/>
<dbReference type="Reactome" id="R-CEL-499943">
    <property type="pathway name" value="Interconversion of nucleotide di- and triphosphates"/>
</dbReference>
<dbReference type="UniPathway" id="UPA00575"/>
<dbReference type="PRO" id="PR:Q22018"/>
<dbReference type="Proteomes" id="UP000001940">
    <property type="component" value="Chromosome II"/>
</dbReference>
<dbReference type="Bgee" id="WBGene00011272">
    <property type="expression patterns" value="Expressed in embryo and 4 other cell types or tissues"/>
</dbReference>
<dbReference type="GO" id="GO:0005737">
    <property type="term" value="C:cytoplasm"/>
    <property type="evidence" value="ECO:0000318"/>
    <property type="project" value="GO_Central"/>
</dbReference>
<dbReference type="GO" id="GO:0005739">
    <property type="term" value="C:mitochondrion"/>
    <property type="evidence" value="ECO:0000318"/>
    <property type="project" value="GO_Central"/>
</dbReference>
<dbReference type="GO" id="GO:0005634">
    <property type="term" value="C:nucleus"/>
    <property type="evidence" value="ECO:0000318"/>
    <property type="project" value="GO_Central"/>
</dbReference>
<dbReference type="GO" id="GO:0005524">
    <property type="term" value="F:ATP binding"/>
    <property type="evidence" value="ECO:0007669"/>
    <property type="project" value="UniProtKB-KW"/>
</dbReference>
<dbReference type="GO" id="GO:0004798">
    <property type="term" value="F:dTMP kinase activity"/>
    <property type="evidence" value="ECO:0000318"/>
    <property type="project" value="GO_Central"/>
</dbReference>
<dbReference type="GO" id="GO:0004550">
    <property type="term" value="F:nucleoside diphosphate kinase activity"/>
    <property type="evidence" value="ECO:0000318"/>
    <property type="project" value="GO_Central"/>
</dbReference>
<dbReference type="GO" id="GO:0006233">
    <property type="term" value="P:dTDP biosynthetic process"/>
    <property type="evidence" value="ECO:0000318"/>
    <property type="project" value="GO_Central"/>
</dbReference>
<dbReference type="GO" id="GO:0006235">
    <property type="term" value="P:dTTP biosynthetic process"/>
    <property type="evidence" value="ECO:0000318"/>
    <property type="project" value="GO_Central"/>
</dbReference>
<dbReference type="GO" id="GO:0006227">
    <property type="term" value="P:dUDP biosynthetic process"/>
    <property type="evidence" value="ECO:0000318"/>
    <property type="project" value="GO_Central"/>
</dbReference>
<dbReference type="CDD" id="cd01672">
    <property type="entry name" value="TMPK"/>
    <property type="match status" value="1"/>
</dbReference>
<dbReference type="FunFam" id="3.40.50.300:FF:000679">
    <property type="entry name" value="Thymidylate kinase"/>
    <property type="match status" value="1"/>
</dbReference>
<dbReference type="Gene3D" id="3.40.50.300">
    <property type="entry name" value="P-loop containing nucleotide triphosphate hydrolases"/>
    <property type="match status" value="1"/>
</dbReference>
<dbReference type="HAMAP" id="MF_00165">
    <property type="entry name" value="Thymidylate_kinase"/>
    <property type="match status" value="1"/>
</dbReference>
<dbReference type="InterPro" id="IPR027417">
    <property type="entry name" value="P-loop_NTPase"/>
</dbReference>
<dbReference type="InterPro" id="IPR039430">
    <property type="entry name" value="Thymidylate_kin-like_dom"/>
</dbReference>
<dbReference type="InterPro" id="IPR018095">
    <property type="entry name" value="Thymidylate_kin_CS"/>
</dbReference>
<dbReference type="InterPro" id="IPR018094">
    <property type="entry name" value="Thymidylate_kinase"/>
</dbReference>
<dbReference type="NCBIfam" id="TIGR00041">
    <property type="entry name" value="DTMP_kinase"/>
    <property type="match status" value="1"/>
</dbReference>
<dbReference type="PANTHER" id="PTHR10344">
    <property type="entry name" value="THYMIDYLATE KINASE"/>
    <property type="match status" value="1"/>
</dbReference>
<dbReference type="PANTHER" id="PTHR10344:SF1">
    <property type="entry name" value="THYMIDYLATE KINASE"/>
    <property type="match status" value="1"/>
</dbReference>
<dbReference type="Pfam" id="PF02223">
    <property type="entry name" value="Thymidylate_kin"/>
    <property type="match status" value="1"/>
</dbReference>
<dbReference type="SUPFAM" id="SSF52540">
    <property type="entry name" value="P-loop containing nucleoside triphosphate hydrolases"/>
    <property type="match status" value="1"/>
</dbReference>
<dbReference type="PROSITE" id="PS01331">
    <property type="entry name" value="THYMIDYLATE_KINASE"/>
    <property type="match status" value="1"/>
</dbReference>
<comment type="function">
    <text evidence="1">Catalyzes the conversion of dTMP to dTDP.</text>
</comment>
<comment type="catalytic activity">
    <reaction>
        <text>dTMP + ATP = dTDP + ADP</text>
        <dbReference type="Rhea" id="RHEA:13517"/>
        <dbReference type="ChEBI" id="CHEBI:30616"/>
        <dbReference type="ChEBI" id="CHEBI:58369"/>
        <dbReference type="ChEBI" id="CHEBI:63528"/>
        <dbReference type="ChEBI" id="CHEBI:456216"/>
        <dbReference type="EC" id="2.7.4.9"/>
    </reaction>
</comment>
<comment type="pathway">
    <text>Pyrimidine metabolism; dTTP biosynthesis.</text>
</comment>
<comment type="similarity">
    <text evidence="4">Belongs to the thymidylate kinase family.</text>
</comment>
<feature type="chain" id="PRO_0000155212" description="Thymidylate kinase">
    <location>
        <begin position="1"/>
        <end position="218"/>
    </location>
</feature>
<feature type="binding site" evidence="3">
    <location>
        <begin position="15"/>
        <end position="22"/>
    </location>
    <ligand>
        <name>ATP</name>
        <dbReference type="ChEBI" id="CHEBI:30616"/>
    </ligand>
</feature>
<proteinExistence type="inferred from homology"/>
<name>KTHY_CAEEL</name>
<evidence type="ECO:0000250" key="1"/>
<evidence type="ECO:0000250" key="2">
    <source>
        <dbReference type="UniProtKB" id="P23919"/>
    </source>
</evidence>
<evidence type="ECO:0000255" key="3"/>
<evidence type="ECO:0000305" key="4"/>
<evidence type="ECO:0000312" key="5">
    <source>
        <dbReference type="WormBase" id="R53.2"/>
    </source>
</evidence>
<gene>
    <name evidence="5" type="primary">dtmk-1</name>
    <name evidence="5" type="ORF">R53.2</name>
</gene>
<keyword id="KW-0067">ATP-binding</keyword>
<keyword id="KW-0418">Kinase</keyword>
<keyword id="KW-0545">Nucleotide biosynthesis</keyword>
<keyword id="KW-0547">Nucleotide-binding</keyword>
<keyword id="KW-1185">Reference proteome</keyword>
<keyword id="KW-0808">Transferase</keyword>